<name>O16A_CONSE</name>
<feature type="signal peptide" evidence="2">
    <location>
        <begin position="1"/>
        <end position="22"/>
    </location>
</feature>
<feature type="propeptide" id="PRO_0000392703" evidence="1">
    <location>
        <begin position="23"/>
        <end position="49"/>
    </location>
</feature>
<feature type="peptide" id="PRO_0000044874" description="Delta-conotoxin-like SmVIA">
    <location>
        <begin position="52"/>
        <end position="82"/>
    </location>
</feature>
<feature type="modified residue" description="4-hydroxyproline" evidence="1">
    <location>
        <position position="65"/>
    </location>
</feature>
<feature type="disulfide bond" evidence="1">
    <location>
        <begin position="54"/>
        <end position="69"/>
    </location>
</feature>
<feature type="disulfide bond" evidence="1">
    <location>
        <begin position="61"/>
        <end position="73"/>
    </location>
</feature>
<feature type="disulfide bond" evidence="1">
    <location>
        <begin position="68"/>
        <end position="77"/>
    </location>
</feature>
<organism>
    <name type="scientific">Conus stercusmuscarum</name>
    <name type="common">Fly-specked cone</name>
    <dbReference type="NCBI Taxonomy" id="89452"/>
    <lineage>
        <taxon>Eukaryota</taxon>
        <taxon>Metazoa</taxon>
        <taxon>Spiralia</taxon>
        <taxon>Lophotrochozoa</taxon>
        <taxon>Mollusca</taxon>
        <taxon>Gastropoda</taxon>
        <taxon>Caenogastropoda</taxon>
        <taxon>Neogastropoda</taxon>
        <taxon>Conoidea</taxon>
        <taxon>Conidae</taxon>
        <taxon>Conus</taxon>
        <taxon>Pionoconus</taxon>
    </lineage>
</organism>
<sequence length="82" mass="9169">MKLTCVMIVAVLFLIAWTFVTADDSRNGLKNLFPKARHEMKNPEASKLNKRDGCSSGGTFCGIRPGLCCSEFCFLWCITFID</sequence>
<proteinExistence type="evidence at transcript level"/>
<reference key="1">
    <citation type="patent" date="2003-11-11" number="JP2003533178">
        <title>O-superfamily conotoxin peptides.</title>
        <authorList>
            <person name="Hillyard D.R."/>
            <person name="Mcintosh M.J."/>
            <person name="Jones R.M."/>
            <person name="Cartier E.G."/>
            <person name="Watkins M."/>
            <person name="Olivera B.M."/>
            <person name="Layer R.T."/>
        </authorList>
    </citation>
    <scope>NUCLEOTIDE SEQUENCE</scope>
</reference>
<reference key="2">
    <citation type="journal article" date="2001" name="Biochemistry">
        <title>Delta-conotoxin structure/function through a cladistic analysis.</title>
        <authorList>
            <person name="Bulaj G."/>
            <person name="DeLaCruz R."/>
            <person name="Azimi-Zonooz A."/>
            <person name="West P."/>
            <person name="Watkins M."/>
            <person name="Yoshikami D."/>
            <person name="Olivera B.M."/>
        </authorList>
    </citation>
    <scope>NUCLEOTIDE SEQUENCE [MRNA] OF 52-82</scope>
    <source>
        <tissue>Venom duct</tissue>
    </source>
</reference>
<dbReference type="EMBL" id="DJ379570">
    <property type="status" value="NOT_ANNOTATED_CDS"/>
    <property type="molecule type" value="Unassigned_DNA"/>
</dbReference>
<dbReference type="ConoServer" id="1620">
    <property type="toxin name" value="SmVIA"/>
</dbReference>
<dbReference type="GO" id="GO:0005576">
    <property type="term" value="C:extracellular region"/>
    <property type="evidence" value="ECO:0007669"/>
    <property type="project" value="UniProtKB-SubCell"/>
</dbReference>
<dbReference type="GO" id="GO:0044231">
    <property type="term" value="C:host cell presynaptic membrane"/>
    <property type="evidence" value="ECO:0007669"/>
    <property type="project" value="UniProtKB-KW"/>
</dbReference>
<dbReference type="GO" id="GO:0019871">
    <property type="term" value="F:sodium channel inhibitor activity"/>
    <property type="evidence" value="ECO:0007669"/>
    <property type="project" value="InterPro"/>
</dbReference>
<dbReference type="GO" id="GO:0090729">
    <property type="term" value="F:toxin activity"/>
    <property type="evidence" value="ECO:0007669"/>
    <property type="project" value="UniProtKB-KW"/>
</dbReference>
<dbReference type="InterPro" id="IPR004214">
    <property type="entry name" value="Conotoxin"/>
</dbReference>
<dbReference type="InterPro" id="IPR012322">
    <property type="entry name" value="Conotoxin_d-typ_CS"/>
</dbReference>
<dbReference type="InterPro" id="IPR012321">
    <property type="entry name" value="Conotoxin_omega-typ_CS"/>
</dbReference>
<dbReference type="Pfam" id="PF02950">
    <property type="entry name" value="Conotoxin"/>
    <property type="match status" value="1"/>
</dbReference>
<dbReference type="PROSITE" id="PS60005">
    <property type="entry name" value="DELTA_CONOTOXIN"/>
    <property type="match status" value="1"/>
</dbReference>
<protein>
    <recommendedName>
        <fullName>Delta-conotoxin-like SmVIA</fullName>
        <shortName>Delta-SmVIA</shortName>
    </recommendedName>
</protein>
<comment type="function">
    <text evidence="1">Delta-conotoxins bind to site 6 of voltage-gated sodium channels (Nav) and inhibit the inactivation process.</text>
</comment>
<comment type="subcellular location">
    <subcellularLocation>
        <location evidence="1">Secreted</location>
    </subcellularLocation>
</comment>
<comment type="tissue specificity">
    <text>Expressed by the venom duct.</text>
</comment>
<comment type="domain">
    <text evidence="1">The presence of a 'disulfide through disulfide knot' structurally defines this protein as a knottin.</text>
</comment>
<comment type="domain">
    <text>The cysteine framework is VI/VII (C-C-CC-C-C).</text>
</comment>
<comment type="similarity">
    <text evidence="3">Belongs to the conotoxin O1 superfamily.</text>
</comment>
<keyword id="KW-0165">Cleavage on pair of basic residues</keyword>
<keyword id="KW-1015">Disulfide bond</keyword>
<keyword id="KW-0379">Hydroxylation</keyword>
<keyword id="KW-0872">Ion channel impairing toxin</keyword>
<keyword id="KW-0960">Knottin</keyword>
<keyword id="KW-0528">Neurotoxin</keyword>
<keyword id="KW-0638">Presynaptic neurotoxin</keyword>
<keyword id="KW-0964">Secreted</keyword>
<keyword id="KW-0732">Signal</keyword>
<keyword id="KW-0800">Toxin</keyword>
<keyword id="KW-0738">Voltage-gated sodium channel impairing toxin</keyword>
<evidence type="ECO:0000250" key="1"/>
<evidence type="ECO:0000255" key="2"/>
<evidence type="ECO:0000305" key="3"/>
<accession>P69757</accession>